<comment type="similarity">
    <text evidence="1">Belongs to the UPF0434 family.</text>
</comment>
<proteinExistence type="inferred from homology"/>
<evidence type="ECO:0000255" key="1">
    <source>
        <dbReference type="HAMAP-Rule" id="MF_01187"/>
    </source>
</evidence>
<name>Y767_VESOH</name>
<dbReference type="EMBL" id="AP009247">
    <property type="protein sequence ID" value="BAF61874.1"/>
    <property type="molecule type" value="Genomic_DNA"/>
</dbReference>
<dbReference type="RefSeq" id="WP_011930143.1">
    <property type="nucleotide sequence ID" value="NC_009465.1"/>
</dbReference>
<dbReference type="SMR" id="A5CVZ8"/>
<dbReference type="STRING" id="412965.COSY_0767"/>
<dbReference type="KEGG" id="vok:COSY_0767"/>
<dbReference type="eggNOG" id="COG2835">
    <property type="taxonomic scope" value="Bacteria"/>
</dbReference>
<dbReference type="HOGENOM" id="CLU_155659_1_1_6"/>
<dbReference type="OrthoDB" id="9812205at2"/>
<dbReference type="Proteomes" id="UP000000247">
    <property type="component" value="Chromosome"/>
</dbReference>
<dbReference type="GO" id="GO:0005829">
    <property type="term" value="C:cytosol"/>
    <property type="evidence" value="ECO:0007669"/>
    <property type="project" value="TreeGrafter"/>
</dbReference>
<dbReference type="Gene3D" id="2.20.25.10">
    <property type="match status" value="1"/>
</dbReference>
<dbReference type="HAMAP" id="MF_01187">
    <property type="entry name" value="UPF0434"/>
    <property type="match status" value="1"/>
</dbReference>
<dbReference type="InterPro" id="IPR005651">
    <property type="entry name" value="Trm112-like"/>
</dbReference>
<dbReference type="PANTHER" id="PTHR33505:SF4">
    <property type="entry name" value="PROTEIN PREY, MITOCHONDRIAL"/>
    <property type="match status" value="1"/>
</dbReference>
<dbReference type="PANTHER" id="PTHR33505">
    <property type="entry name" value="ZGC:162634"/>
    <property type="match status" value="1"/>
</dbReference>
<dbReference type="Pfam" id="PF03966">
    <property type="entry name" value="Trm112p"/>
    <property type="match status" value="1"/>
</dbReference>
<dbReference type="SUPFAM" id="SSF158997">
    <property type="entry name" value="Trm112p-like"/>
    <property type="match status" value="1"/>
</dbReference>
<protein>
    <recommendedName>
        <fullName evidence="1">UPF0434 protein COSY_0767</fullName>
    </recommendedName>
</protein>
<reference key="1">
    <citation type="journal article" date="2007" name="Curr. Biol.">
        <title>Reduced genome of the thioautotrophic intracellular symbiont in a deep-sea clam, Calyptogena okutanii.</title>
        <authorList>
            <person name="Kuwahara H."/>
            <person name="Yoshida T."/>
            <person name="Takaki Y."/>
            <person name="Shimamura S."/>
            <person name="Nishi S."/>
            <person name="Harada M."/>
            <person name="Matsuyama K."/>
            <person name="Takishita K."/>
            <person name="Kawato M."/>
            <person name="Uematsu K."/>
            <person name="Fujiwara Y."/>
            <person name="Sato T."/>
            <person name="Kato C."/>
            <person name="Kitagawa M."/>
            <person name="Kato I."/>
            <person name="Maruyama T."/>
        </authorList>
    </citation>
    <scope>NUCLEOTIDE SEQUENCE [LARGE SCALE GENOMIC DNA]</scope>
    <source>
        <strain>HA</strain>
    </source>
</reference>
<organism>
    <name type="scientific">Vesicomyosocius okutanii subsp. Calyptogena okutanii (strain HA)</name>
    <dbReference type="NCBI Taxonomy" id="412965"/>
    <lineage>
        <taxon>Bacteria</taxon>
        <taxon>Pseudomonadati</taxon>
        <taxon>Pseudomonadota</taxon>
        <taxon>Gammaproteobacteria</taxon>
        <taxon>Candidatus Pseudothioglobaceae</taxon>
        <taxon>Candidatus Vesicomyosocius</taxon>
    </lineage>
</organism>
<feature type="chain" id="PRO_1000065858" description="UPF0434 protein COSY_0767">
    <location>
        <begin position="1"/>
        <end position="59"/>
    </location>
</feature>
<sequence length="59" mass="6435">MIDEALLKLLVCPKSKAPLKQVGNELICEVSGLAYPIEDGIPILLVEEARELDKGSDKK</sequence>
<accession>A5CVZ8</accession>
<gene>
    <name type="ordered locus">COSY_0767</name>
</gene>
<keyword id="KW-1185">Reference proteome</keyword>